<sequence>MTMALDHKQIMRMLPHSYPFLLVDRVLECIPGKSIVALKNVTFNEPFFVGHFRDNPVMPGVLIIESMAQSSMLCVVSDREGDEASGNRSVYFMSIDGAKFRRVVVPGDTLTIKSAVIHMRGTTCKFQCHAYVGDELASEAQILAMMG</sequence>
<keyword id="KW-0963">Cytoplasm</keyword>
<keyword id="KW-0441">Lipid A biosynthesis</keyword>
<keyword id="KW-0444">Lipid biosynthesis</keyword>
<keyword id="KW-0443">Lipid metabolism</keyword>
<keyword id="KW-0456">Lyase</keyword>
<keyword id="KW-1185">Reference proteome</keyword>
<organism>
    <name type="scientific">Anaplasma marginale (strain Florida)</name>
    <dbReference type="NCBI Taxonomy" id="320483"/>
    <lineage>
        <taxon>Bacteria</taxon>
        <taxon>Pseudomonadati</taxon>
        <taxon>Pseudomonadota</taxon>
        <taxon>Alphaproteobacteria</taxon>
        <taxon>Rickettsiales</taxon>
        <taxon>Anaplasmataceae</taxon>
        <taxon>Anaplasma</taxon>
    </lineage>
</organism>
<comment type="function">
    <text evidence="1">Involved in unsaturated fatty acids biosynthesis. Catalyzes the dehydration of short chain beta-hydroxyacyl-ACPs and long chain saturated and unsaturated beta-hydroxyacyl-ACPs.</text>
</comment>
<comment type="catalytic activity">
    <reaction evidence="1">
        <text>a (3R)-hydroxyacyl-[ACP] = a (2E)-enoyl-[ACP] + H2O</text>
        <dbReference type="Rhea" id="RHEA:13097"/>
        <dbReference type="Rhea" id="RHEA-COMP:9925"/>
        <dbReference type="Rhea" id="RHEA-COMP:9945"/>
        <dbReference type="ChEBI" id="CHEBI:15377"/>
        <dbReference type="ChEBI" id="CHEBI:78784"/>
        <dbReference type="ChEBI" id="CHEBI:78827"/>
        <dbReference type="EC" id="4.2.1.59"/>
    </reaction>
</comment>
<comment type="subcellular location">
    <subcellularLocation>
        <location evidence="1">Cytoplasm</location>
    </subcellularLocation>
</comment>
<comment type="similarity">
    <text evidence="1">Belongs to the thioester dehydratase family. FabZ subfamily.</text>
</comment>
<feature type="chain" id="PRO_1000134683" description="3-hydroxyacyl-[acyl-carrier-protein] dehydratase FabZ">
    <location>
        <begin position="1"/>
        <end position="147"/>
    </location>
</feature>
<feature type="active site" evidence="1">
    <location>
        <position position="51"/>
    </location>
</feature>
<protein>
    <recommendedName>
        <fullName evidence="1">3-hydroxyacyl-[acyl-carrier-protein] dehydratase FabZ</fullName>
        <ecNumber evidence="1">4.2.1.59</ecNumber>
    </recommendedName>
    <alternativeName>
        <fullName evidence="1">(3R)-hydroxymyristoyl-[acyl-carrier-protein] dehydratase</fullName>
        <shortName evidence="1">(3R)-hydroxymyristoyl-ACP dehydrase</shortName>
    </alternativeName>
    <alternativeName>
        <fullName evidence="1">Beta-hydroxyacyl-ACP dehydratase</fullName>
    </alternativeName>
</protein>
<dbReference type="EC" id="4.2.1.59" evidence="1"/>
<dbReference type="EMBL" id="CP001079">
    <property type="protein sequence ID" value="ACM49661.1"/>
    <property type="molecule type" value="Genomic_DNA"/>
</dbReference>
<dbReference type="SMR" id="B9KGV7"/>
<dbReference type="STRING" id="320483.AMF_830"/>
<dbReference type="KEGG" id="amf:AMF_830"/>
<dbReference type="eggNOG" id="COG0764">
    <property type="taxonomic scope" value="Bacteria"/>
</dbReference>
<dbReference type="HOGENOM" id="CLU_078912_3_0_5"/>
<dbReference type="Proteomes" id="UP000007307">
    <property type="component" value="Chromosome"/>
</dbReference>
<dbReference type="GO" id="GO:0005737">
    <property type="term" value="C:cytoplasm"/>
    <property type="evidence" value="ECO:0007669"/>
    <property type="project" value="UniProtKB-SubCell"/>
</dbReference>
<dbReference type="GO" id="GO:0016020">
    <property type="term" value="C:membrane"/>
    <property type="evidence" value="ECO:0007669"/>
    <property type="project" value="GOC"/>
</dbReference>
<dbReference type="GO" id="GO:0019171">
    <property type="term" value="F:(3R)-hydroxyacyl-[acyl-carrier-protein] dehydratase activity"/>
    <property type="evidence" value="ECO:0007669"/>
    <property type="project" value="UniProtKB-EC"/>
</dbReference>
<dbReference type="GO" id="GO:0006633">
    <property type="term" value="P:fatty acid biosynthetic process"/>
    <property type="evidence" value="ECO:0007669"/>
    <property type="project" value="UniProtKB-UniRule"/>
</dbReference>
<dbReference type="GO" id="GO:0009245">
    <property type="term" value="P:lipid A biosynthetic process"/>
    <property type="evidence" value="ECO:0007669"/>
    <property type="project" value="UniProtKB-UniRule"/>
</dbReference>
<dbReference type="CDD" id="cd01288">
    <property type="entry name" value="FabZ"/>
    <property type="match status" value="1"/>
</dbReference>
<dbReference type="FunFam" id="3.10.129.10:FF:000001">
    <property type="entry name" value="3-hydroxyacyl-[acyl-carrier-protein] dehydratase FabZ"/>
    <property type="match status" value="1"/>
</dbReference>
<dbReference type="Gene3D" id="3.10.129.10">
    <property type="entry name" value="Hotdog Thioesterase"/>
    <property type="match status" value="1"/>
</dbReference>
<dbReference type="HAMAP" id="MF_00406">
    <property type="entry name" value="FabZ"/>
    <property type="match status" value="1"/>
</dbReference>
<dbReference type="InterPro" id="IPR013114">
    <property type="entry name" value="FabA_FabZ"/>
</dbReference>
<dbReference type="InterPro" id="IPR010084">
    <property type="entry name" value="FabZ"/>
</dbReference>
<dbReference type="InterPro" id="IPR029069">
    <property type="entry name" value="HotDog_dom_sf"/>
</dbReference>
<dbReference type="NCBIfam" id="TIGR01750">
    <property type="entry name" value="fabZ"/>
    <property type="match status" value="1"/>
</dbReference>
<dbReference type="NCBIfam" id="NF000582">
    <property type="entry name" value="PRK00006.1"/>
    <property type="match status" value="1"/>
</dbReference>
<dbReference type="PANTHER" id="PTHR30272">
    <property type="entry name" value="3-HYDROXYACYL-[ACYL-CARRIER-PROTEIN] DEHYDRATASE"/>
    <property type="match status" value="1"/>
</dbReference>
<dbReference type="PANTHER" id="PTHR30272:SF1">
    <property type="entry name" value="3-HYDROXYACYL-[ACYL-CARRIER-PROTEIN] DEHYDRATASE"/>
    <property type="match status" value="1"/>
</dbReference>
<dbReference type="Pfam" id="PF07977">
    <property type="entry name" value="FabA"/>
    <property type="match status" value="1"/>
</dbReference>
<dbReference type="SUPFAM" id="SSF54637">
    <property type="entry name" value="Thioesterase/thiol ester dehydrase-isomerase"/>
    <property type="match status" value="1"/>
</dbReference>
<accession>B9KGV7</accession>
<reference key="1">
    <citation type="journal article" date="2009" name="BMC Genomics">
        <title>Conservation in the face of diversity: multistrain analysis of an intracellular bacterium.</title>
        <authorList>
            <person name="Dark M.J."/>
            <person name="Herndon D.R."/>
            <person name="Kappmeyer L.S."/>
            <person name="Gonzales M.P."/>
            <person name="Nordeen E."/>
            <person name="Palmer G.H."/>
            <person name="Knowles D.P. Jr."/>
            <person name="Brayton K.A."/>
        </authorList>
    </citation>
    <scope>NUCLEOTIDE SEQUENCE [LARGE SCALE GENOMIC DNA]</scope>
    <source>
        <strain>Florida</strain>
    </source>
</reference>
<evidence type="ECO:0000255" key="1">
    <source>
        <dbReference type="HAMAP-Rule" id="MF_00406"/>
    </source>
</evidence>
<proteinExistence type="inferred from homology"/>
<name>FABZ_ANAMF</name>
<gene>
    <name evidence="1" type="primary">fabZ</name>
    <name type="ordered locus">AMF_830</name>
</gene>